<sequence>MATTKSVLVLFFMILATTSSTCATLGEMVTVLSIDGGGIKGIIPATILEFLEGQLQEVDNNKDARLADYFDVIGGTSTGGLLTAMITTPNENNRPFAAAKDIVPFYFEHGPHIFNSSGSIFGPMYDGKYFLQVLQEKLGETRVHQALTEVAISSFDIKTNKPVIFTKSNLAKSPELDAKMYDICYSTAAAPTYFPPHYFVTHTSNGDKYEFNLVDGAVATVGDPALLSLSVATKLAQVDPKFASIKSLNYKQMLLLSLGTGTNSEFDKTYTAEEAAKWGPLRWILAIQQMTNAASSYMTDYYLSTVFQARHSQNNYLRVQENALTGTTTEMDDASEANMELLVQVGEKLLKKPVSKDSPETYEEALKRFAKLLSDRKKLRANKASY</sequence>
<name>PT2K3_SOLTU</name>
<feature type="signal peptide" evidence="5">
    <location>
        <begin position="1"/>
        <end position="23"/>
    </location>
</feature>
<feature type="chain" id="PRO_5000145462" description="Patatin-2-Kuras 3">
    <location>
        <begin position="24"/>
        <end position="386"/>
    </location>
</feature>
<feature type="domain" description="PNPLA" evidence="3">
    <location>
        <begin position="32"/>
        <end position="229"/>
    </location>
</feature>
<feature type="coiled-coil region" evidence="2">
    <location>
        <begin position="321"/>
        <end position="384"/>
    </location>
</feature>
<feature type="short sequence motif" description="GXGXXG" evidence="3">
    <location>
        <begin position="36"/>
        <end position="41"/>
    </location>
</feature>
<feature type="short sequence motif" description="GXSXG" evidence="3">
    <location>
        <begin position="75"/>
        <end position="79"/>
    </location>
</feature>
<feature type="short sequence motif" description="DGA/G" evidence="3">
    <location>
        <begin position="215"/>
        <end position="217"/>
    </location>
</feature>
<feature type="active site" description="Nucleophile" evidence="3">
    <location>
        <position position="77"/>
    </location>
</feature>
<feature type="active site" description="Proton acceptor" evidence="3">
    <location>
        <position position="215"/>
    </location>
</feature>
<feature type="glycosylation site" description="N-linked (GlcNAc...) asparagine" evidence="2">
    <location>
        <position position="115"/>
    </location>
</feature>
<keyword id="KW-0175">Coiled coil</keyword>
<keyword id="KW-0903">Direct protein sequencing</keyword>
<keyword id="KW-0325">Glycoprotein</keyword>
<keyword id="KW-0378">Hydrolase</keyword>
<keyword id="KW-0442">Lipid degradation</keyword>
<keyword id="KW-0443">Lipid metabolism</keyword>
<keyword id="KW-0611">Plant defense</keyword>
<keyword id="KW-1185">Reference proteome</keyword>
<keyword id="KW-0732">Signal</keyword>
<keyword id="KW-0758">Storage protein</keyword>
<keyword id="KW-0926">Vacuole</keyword>
<organism>
    <name type="scientific">Solanum tuberosum</name>
    <name type="common">Potato</name>
    <dbReference type="NCBI Taxonomy" id="4113"/>
    <lineage>
        <taxon>Eukaryota</taxon>
        <taxon>Viridiplantae</taxon>
        <taxon>Streptophyta</taxon>
        <taxon>Embryophyta</taxon>
        <taxon>Tracheophyta</taxon>
        <taxon>Spermatophyta</taxon>
        <taxon>Magnoliopsida</taxon>
        <taxon>eudicotyledons</taxon>
        <taxon>Gunneridae</taxon>
        <taxon>Pentapetalae</taxon>
        <taxon>asterids</taxon>
        <taxon>lamiids</taxon>
        <taxon>Solanales</taxon>
        <taxon>Solanaceae</taxon>
        <taxon>Solanoideae</taxon>
        <taxon>Solaneae</taxon>
        <taxon>Solanum</taxon>
    </lineage>
</organism>
<evidence type="ECO:0000250" key="1"/>
<evidence type="ECO:0000255" key="2"/>
<evidence type="ECO:0000255" key="3">
    <source>
        <dbReference type="PROSITE-ProRule" id="PRU01161"/>
    </source>
</evidence>
<evidence type="ECO:0000269" key="4">
    <source>
    </source>
</evidence>
<evidence type="ECO:0000269" key="5">
    <source>
    </source>
</evidence>
<evidence type="ECO:0000305" key="6"/>
<gene>
    <name type="primary">pat2-k3</name>
    <name type="synonym">PGM01</name>
</gene>
<proteinExistence type="evidence at protein level"/>
<protein>
    <recommendedName>
        <fullName>Patatin-2-Kuras 3</fullName>
        <ecNumber>3.1.1.-</ecNumber>
    </recommendedName>
</protein>
<reference key="1">
    <citation type="journal article" date="1984" name="Nucleic Acids Res.">
        <title>Isolation and sequence analysis of cDNAs for the major potato tuber protein, patatin.</title>
        <authorList>
            <person name="Mignery G.A."/>
            <person name="Pikaard C.S."/>
            <person name="Hannapel D.J."/>
            <person name="Park W.D."/>
        </authorList>
    </citation>
    <scope>NUCLEOTIDE SEQUENCE [MRNA]</scope>
    <source>
        <strain>cv. Superior</strain>
        <tissue>Tuber</tissue>
    </source>
</reference>
<reference key="2">
    <citation type="journal article" date="2006" name="FEBS J.">
        <title>Patatins, Kunitz protease inhibitors and other major proteins in tuber of potato cv. Kuras.</title>
        <authorList>
            <person name="Bauw G."/>
            <person name="Nielsen H.V."/>
            <person name="Emmersen J."/>
            <person name="Nielsen K.L."/>
            <person name="Joergensen M."/>
            <person name="Welinder K.G."/>
        </authorList>
    </citation>
    <scope>NUCLEOTIDE SEQUENCE [MRNA]</scope>
    <scope>PROTEIN SEQUENCE OF 24-100; 129-137; 143-167; 252-348 AND 352-371</scope>
    <scope>TISSUE SPECIFICITY</scope>
    <scope>IDENTIFICATION BY MASS SPECTROMETRY</scope>
    <source>
        <strain>cv. Kuras</strain>
        <tissue>Tuber</tissue>
    </source>
</reference>
<reference key="3">
    <citation type="journal article" date="2006" name="Genetics">
        <title>Structural diversity and differential transcription of the patatin multicopy gene family during potato tuber development.</title>
        <authorList>
            <person name="Stupar R.M."/>
            <person name="Beaubien K.A."/>
            <person name="Jin W."/>
            <person name="Song J."/>
            <person name="Lee M.-K."/>
            <person name="Wu C."/>
            <person name="Zhang H.-B."/>
            <person name="Han B."/>
            <person name="Jiang J."/>
        </authorList>
    </citation>
    <scope>NUCLEOTIDE SEQUENCE [MRNA] OF 255-386</scope>
    <scope>DEVELOPMENTAL STAGE</scope>
    <scope>TISSUE SPECIFICITY</scope>
    <source>
        <strain>cv. Kennebec</strain>
        <tissue>Tuber</tissue>
    </source>
</reference>
<accession>Q42502</accession>
<accession>Q2MYG6</accession>
<dbReference type="EC" id="3.1.1.-"/>
<dbReference type="EMBL" id="X01125">
    <property type="protein sequence ID" value="CAA25592.1"/>
    <property type="molecule type" value="mRNA"/>
</dbReference>
<dbReference type="EMBL" id="DQ114419">
    <property type="protein sequence ID" value="AAZ75960.1"/>
    <property type="molecule type" value="mRNA"/>
</dbReference>
<dbReference type="EMBL" id="DQ274354">
    <property type="protein sequence ID" value="ABC58937.1"/>
    <property type="molecule type" value="mRNA"/>
</dbReference>
<dbReference type="PIR" id="S51596">
    <property type="entry name" value="S51596"/>
</dbReference>
<dbReference type="SMR" id="Q42502"/>
<dbReference type="GlyCosmos" id="Q42502">
    <property type="glycosylation" value="1 site, No reported glycans"/>
</dbReference>
<dbReference type="InParanoid" id="Q42502"/>
<dbReference type="Proteomes" id="UP000011115">
    <property type="component" value="Unassembled WGS sequence"/>
</dbReference>
<dbReference type="ExpressionAtlas" id="Q42502">
    <property type="expression patterns" value="baseline"/>
</dbReference>
<dbReference type="GO" id="GO:0005773">
    <property type="term" value="C:vacuole"/>
    <property type="evidence" value="ECO:0007669"/>
    <property type="project" value="UniProtKB-SubCell"/>
</dbReference>
<dbReference type="GO" id="GO:0047372">
    <property type="term" value="F:monoacylglycerol lipase activity"/>
    <property type="evidence" value="ECO:0000318"/>
    <property type="project" value="GO_Central"/>
</dbReference>
<dbReference type="GO" id="GO:0045735">
    <property type="term" value="F:nutrient reservoir activity"/>
    <property type="evidence" value="ECO:0007669"/>
    <property type="project" value="UniProtKB-KW"/>
</dbReference>
<dbReference type="GO" id="GO:0004620">
    <property type="term" value="F:phospholipase activity"/>
    <property type="evidence" value="ECO:0000318"/>
    <property type="project" value="GO_Central"/>
</dbReference>
<dbReference type="GO" id="GO:0006952">
    <property type="term" value="P:defense response"/>
    <property type="evidence" value="ECO:0007669"/>
    <property type="project" value="UniProtKB-KW"/>
</dbReference>
<dbReference type="GO" id="GO:0016042">
    <property type="term" value="P:lipid catabolic process"/>
    <property type="evidence" value="ECO:0007669"/>
    <property type="project" value="UniProtKB-KW"/>
</dbReference>
<dbReference type="Gene3D" id="3.40.1090.10">
    <property type="entry name" value="Cytosolic phospholipase A2 catalytic domain"/>
    <property type="match status" value="1"/>
</dbReference>
<dbReference type="InterPro" id="IPR016035">
    <property type="entry name" value="Acyl_Trfase/lysoPLipase"/>
</dbReference>
<dbReference type="InterPro" id="IPR002641">
    <property type="entry name" value="PNPLA_dom"/>
</dbReference>
<dbReference type="PANTHER" id="PTHR32176:SF85">
    <property type="entry name" value="PATATIN GROUP D-2"/>
    <property type="match status" value="1"/>
</dbReference>
<dbReference type="PANTHER" id="PTHR32176">
    <property type="entry name" value="XYLOSE ISOMERASE"/>
    <property type="match status" value="1"/>
</dbReference>
<dbReference type="Pfam" id="PF01734">
    <property type="entry name" value="Patatin"/>
    <property type="match status" value="1"/>
</dbReference>
<dbReference type="SUPFAM" id="SSF52151">
    <property type="entry name" value="FabD/lysophospholipase-like"/>
    <property type="match status" value="1"/>
</dbReference>
<dbReference type="PROSITE" id="PS51635">
    <property type="entry name" value="PNPLA"/>
    <property type="match status" value="1"/>
</dbReference>
<comment type="function">
    <text evidence="1">Probable lipolytic acyl hydrolase (LAH), an activity which is thought to be involved in the response of tubers to pathogens.</text>
</comment>
<comment type="subcellular location">
    <subcellularLocation>
        <location evidence="1">Vacuole</location>
    </subcellularLocation>
</comment>
<comment type="tissue specificity">
    <text evidence="4 5">Tuber.</text>
</comment>
<comment type="developmental stage">
    <text evidence="4">Accumulates progressively during tuber formation from stolon.</text>
</comment>
<comment type="domain">
    <text>The nitrogen atoms of the two glycine residues in the GGXR motif define the oxyanion hole, and stabilize the oxyanion that forms during the nucleophilic attack by the catalytic serine during substrate cleavage.</text>
</comment>
<comment type="miscellaneous">
    <text>Patatin have a dual role as a somatic storage protein and as an enzyme involved in host resistance.</text>
</comment>
<comment type="similarity">
    <text evidence="6">Belongs to the patatin family.</text>
</comment>